<feature type="chain" id="PRO_0000272279" description="Protein CLASP-2">
    <location>
        <begin position="1"/>
        <end position="791" status="greater than"/>
    </location>
</feature>
<feature type="region of interest" description="Disordered" evidence="2">
    <location>
        <begin position="259"/>
        <end position="283"/>
    </location>
</feature>
<feature type="region of interest" description="Disordered" evidence="2">
    <location>
        <begin position="315"/>
        <end position="391"/>
    </location>
</feature>
<feature type="region of interest" description="Disordered" evidence="2">
    <location>
        <begin position="422"/>
        <end position="454"/>
    </location>
</feature>
<feature type="compositionally biased region" description="Low complexity" evidence="2">
    <location>
        <begin position="259"/>
        <end position="271"/>
    </location>
</feature>
<feature type="compositionally biased region" description="Low complexity" evidence="2">
    <location>
        <begin position="323"/>
        <end position="334"/>
    </location>
</feature>
<feature type="compositionally biased region" description="Low complexity" evidence="2">
    <location>
        <begin position="372"/>
        <end position="381"/>
    </location>
</feature>
<feature type="compositionally biased region" description="Polar residues" evidence="2">
    <location>
        <begin position="422"/>
        <end position="434"/>
    </location>
</feature>
<feature type="non-terminal residue">
    <location>
        <position position="791"/>
    </location>
</feature>
<sequence>MSRVVSRTVPGGACVVNKDDFLKSFNDVDKVSVSSLADAKSKFDQVIAILSKSQEDWNKRRTQLQIIRSIVINCEDVIGRDQLLGQLVRLADCLDLSVKDLRSQILREAAITCSFLFEKYGNDVHQIAERCLPTAFSQLAVSTKVMATSGATLTLFLVQYVQTKQIFTCLTTYSTSKDKNQRRQLCVLLEIVIEHWNDKLKKSILPQIMELIKSAISDADPETRAAGRKAFNKLDAIHSEEADKLFASVDANKQKMLRASDAASSSTSVNSERGSAPFRSKLSAGSVGGMRNVPNISSKFLAQRSASAIDTKQVTRMTTSVSRTPNTRPMTTRTLSKVDTSPGGSKFARPTVGTLGPRTTSNLRARGSVPTSQPGSRNGSPPRRPSTTGTLPMEMQRVKSNLGSSSFVSSLTPDQAESLQKAMNTAKESLGQPSRTEDDEFLLPKRKPKTPQKSAVDISRVEAVIRACVSTSANEKRDGIKMLSIIVSEPNLSQIELKNIGQVLNRLLGEATNPVVLESVASFVKAHHSRLSEWLKLGLGKMFAKKGSEMMPIMKKHIVTTINAILSSFDPALQLKATCELMCDPIHLLSPKARVALLEYLTDLLEKHMERGSPFNTKEVKATILKMFSWMSDQRNMQQIVPHGEKVLCGLFALNAADFSALFNDFNPDYREWAYRILQAHGHNQHAPAPESPSPVRDQQVRANISNTAAQIEDFVVARNFELSAEKSPTSRGMLTSGFKRTDAEPLRPLESDMNTQRMDDISINESFDRLKVRILETTGFYAAFKVDFQE</sequence>
<reference key="1">
    <citation type="journal article" date="2003" name="PLoS Biol.">
        <title>The genome sequence of Caenorhabditis briggsae: a platform for comparative genomics.</title>
        <authorList>
            <person name="Stein L.D."/>
            <person name="Bao Z."/>
            <person name="Blasiar D."/>
            <person name="Blumenthal T."/>
            <person name="Brent M.R."/>
            <person name="Chen N."/>
            <person name="Chinwalla A."/>
            <person name="Clarke L."/>
            <person name="Clee C."/>
            <person name="Coghlan A."/>
            <person name="Coulson A."/>
            <person name="D'Eustachio P."/>
            <person name="Fitch D.H.A."/>
            <person name="Fulton L.A."/>
            <person name="Fulton R.E."/>
            <person name="Griffiths-Jones S."/>
            <person name="Harris T.W."/>
            <person name="Hillier L.W."/>
            <person name="Kamath R."/>
            <person name="Kuwabara P.E."/>
            <person name="Mardis E.R."/>
            <person name="Marra M.A."/>
            <person name="Miner T.L."/>
            <person name="Minx P."/>
            <person name="Mullikin J.C."/>
            <person name="Plumb R.W."/>
            <person name="Rogers J."/>
            <person name="Schein J.E."/>
            <person name="Sohrmann M."/>
            <person name="Spieth J."/>
            <person name="Stajich J.E."/>
            <person name="Wei C."/>
            <person name="Willey D."/>
            <person name="Wilson R.K."/>
            <person name="Durbin R.M."/>
            <person name="Waterston R.H."/>
        </authorList>
    </citation>
    <scope>NUCLEOTIDE SEQUENCE [LARGE SCALE GENOMIC DNA]</scope>
    <source>
        <strain>AF16</strain>
    </source>
</reference>
<protein>
    <recommendedName>
        <fullName>Protein CLASP-2</fullName>
    </recommendedName>
</protein>
<evidence type="ECO:0000250" key="1"/>
<evidence type="ECO:0000256" key="2">
    <source>
        <dbReference type="SAM" id="MobiDB-lite"/>
    </source>
</evidence>
<evidence type="ECO:0000305" key="3"/>
<accession>Q61J98</accession>
<accession>A8X9V7</accession>
<comment type="function">
    <text evidence="1">Probable microtubule plus-end tracking protein that promotes the stabilization of dynamic microtubules. Required for the formation of mitotic and meiotic spindles. Specifically promotes the polymerization of kinetochore-bound microtubules. Also required for cytoplasmic streaming (By similarity).</text>
</comment>
<comment type="subunit">
    <text evidence="1">Interacts with hcp-1 and hcp-2.</text>
</comment>
<comment type="subcellular location">
    <subcellularLocation>
        <location evidence="1">Cytoplasm</location>
        <location evidence="1">Cytoskeleton</location>
    </subcellularLocation>
    <subcellularLocation>
        <location evidence="1">Cytoplasm</location>
        <location evidence="1">Cytoskeleton</location>
        <location evidence="1">Microtubule organizing center</location>
        <location evidence="1">Centrosome</location>
    </subcellularLocation>
    <subcellularLocation>
        <location evidence="1">Chromosome</location>
        <location evidence="1">Centromere</location>
        <location evidence="1">Kinetochore</location>
    </subcellularLocation>
    <subcellularLocation>
        <location evidence="1">Cytoplasm</location>
        <location evidence="1">Cytoskeleton</location>
        <location evidence="1">Spindle</location>
    </subcellularLocation>
    <text evidence="1">Localized to kinetochores during metaphase, and to the spindle region.</text>
</comment>
<comment type="similarity">
    <text evidence="3">Belongs to the CLASP family.</text>
</comment>
<comment type="sequence caution" evidence="3">
    <conflict type="erroneous gene model prediction">
        <sequence resource="EMBL-CDS" id="CAP29422"/>
    </conflict>
    <text>The C-terminus of this protein appears likely to be in the unsequenced region.</text>
</comment>
<name>CLAP2_CAEBR</name>
<dbReference type="EMBL" id="HE601459">
    <property type="protein sequence ID" value="CAP29422.3"/>
    <property type="status" value="ALT_SEQ"/>
    <property type="molecule type" value="Genomic_DNA"/>
</dbReference>
<dbReference type="SMR" id="Q61J98"/>
<dbReference type="FunCoup" id="Q61J98">
    <property type="interactions" value="2736"/>
</dbReference>
<dbReference type="STRING" id="6238.Q61J98"/>
<dbReference type="EnsemblMetazoa" id="CBG09877.1">
    <property type="protein sequence ID" value="CBG09877.1"/>
    <property type="gene ID" value="WBGene00031391"/>
</dbReference>
<dbReference type="WormBase" id="CBG09877">
    <property type="protein sequence ID" value="CBP37613"/>
    <property type="gene ID" value="WBGene00031391"/>
    <property type="gene designation" value="Cbr-cls-2"/>
</dbReference>
<dbReference type="eggNOG" id="KOG2956">
    <property type="taxonomic scope" value="Eukaryota"/>
</dbReference>
<dbReference type="HOGENOM" id="CLU_005060_1_0_1"/>
<dbReference type="InParanoid" id="Q61J98"/>
<dbReference type="OMA" id="FSWMSDQ"/>
<dbReference type="Proteomes" id="UP000008549">
    <property type="component" value="Unassembled WGS sequence"/>
</dbReference>
<dbReference type="GO" id="GO:0045180">
    <property type="term" value="C:basal cortex"/>
    <property type="evidence" value="ECO:0000318"/>
    <property type="project" value="GO_Central"/>
</dbReference>
<dbReference type="GO" id="GO:0005813">
    <property type="term" value="C:centrosome"/>
    <property type="evidence" value="ECO:0007669"/>
    <property type="project" value="UniProtKB-SubCell"/>
</dbReference>
<dbReference type="GO" id="GO:0005881">
    <property type="term" value="C:cytoplasmic microtubule"/>
    <property type="evidence" value="ECO:0000318"/>
    <property type="project" value="GO_Central"/>
</dbReference>
<dbReference type="GO" id="GO:0000776">
    <property type="term" value="C:kinetochore"/>
    <property type="evidence" value="ECO:0000318"/>
    <property type="project" value="GO_Central"/>
</dbReference>
<dbReference type="GO" id="GO:0005815">
    <property type="term" value="C:microtubule organizing center"/>
    <property type="evidence" value="ECO:0000318"/>
    <property type="project" value="GO_Central"/>
</dbReference>
<dbReference type="GO" id="GO:0072686">
    <property type="term" value="C:mitotic spindle"/>
    <property type="evidence" value="ECO:0000318"/>
    <property type="project" value="GO_Central"/>
</dbReference>
<dbReference type="GO" id="GO:0005876">
    <property type="term" value="C:spindle microtubule"/>
    <property type="evidence" value="ECO:0000318"/>
    <property type="project" value="GO_Central"/>
</dbReference>
<dbReference type="GO" id="GO:0008017">
    <property type="term" value="F:microtubule binding"/>
    <property type="evidence" value="ECO:0000318"/>
    <property type="project" value="GO_Central"/>
</dbReference>
<dbReference type="GO" id="GO:0051301">
    <property type="term" value="P:cell division"/>
    <property type="evidence" value="ECO:0007669"/>
    <property type="project" value="UniProtKB-KW"/>
</dbReference>
<dbReference type="GO" id="GO:0040001">
    <property type="term" value="P:establishment of mitotic spindle localization"/>
    <property type="evidence" value="ECO:0000318"/>
    <property type="project" value="GO_Central"/>
</dbReference>
<dbReference type="GO" id="GO:0051321">
    <property type="term" value="P:meiotic cell cycle"/>
    <property type="evidence" value="ECO:0007669"/>
    <property type="project" value="UniProtKB-KW"/>
</dbReference>
<dbReference type="GO" id="GO:0090307">
    <property type="term" value="P:mitotic spindle assembly"/>
    <property type="evidence" value="ECO:0000318"/>
    <property type="project" value="GO_Central"/>
</dbReference>
<dbReference type="Gene3D" id="1.25.10.10">
    <property type="entry name" value="Leucine-rich Repeat Variant"/>
    <property type="match status" value="2"/>
</dbReference>
<dbReference type="InterPro" id="IPR011989">
    <property type="entry name" value="ARM-like"/>
</dbReference>
<dbReference type="InterPro" id="IPR016024">
    <property type="entry name" value="ARM-type_fold"/>
</dbReference>
<dbReference type="InterPro" id="IPR024395">
    <property type="entry name" value="CLASP_N_dom"/>
</dbReference>
<dbReference type="InterPro" id="IPR034085">
    <property type="entry name" value="TOG"/>
</dbReference>
<dbReference type="PANTHER" id="PTHR21567">
    <property type="entry name" value="CLASP"/>
    <property type="match status" value="1"/>
</dbReference>
<dbReference type="PANTHER" id="PTHR21567:SF9">
    <property type="entry name" value="CLIP-ASSOCIATING PROTEIN"/>
    <property type="match status" value="1"/>
</dbReference>
<dbReference type="Pfam" id="PF12348">
    <property type="entry name" value="CLASP_N"/>
    <property type="match status" value="1"/>
</dbReference>
<dbReference type="SMART" id="SM01349">
    <property type="entry name" value="TOG"/>
    <property type="match status" value="1"/>
</dbReference>
<dbReference type="SUPFAM" id="SSF48371">
    <property type="entry name" value="ARM repeat"/>
    <property type="match status" value="1"/>
</dbReference>
<organism>
    <name type="scientific">Caenorhabditis briggsae</name>
    <dbReference type="NCBI Taxonomy" id="6238"/>
    <lineage>
        <taxon>Eukaryota</taxon>
        <taxon>Metazoa</taxon>
        <taxon>Ecdysozoa</taxon>
        <taxon>Nematoda</taxon>
        <taxon>Chromadorea</taxon>
        <taxon>Rhabditida</taxon>
        <taxon>Rhabditina</taxon>
        <taxon>Rhabditomorpha</taxon>
        <taxon>Rhabditoidea</taxon>
        <taxon>Rhabditidae</taxon>
        <taxon>Peloderinae</taxon>
        <taxon>Caenorhabditis</taxon>
    </lineage>
</organism>
<keyword id="KW-0131">Cell cycle</keyword>
<keyword id="KW-0132">Cell division</keyword>
<keyword id="KW-0137">Centromere</keyword>
<keyword id="KW-0158">Chromosome</keyword>
<keyword id="KW-0963">Cytoplasm</keyword>
<keyword id="KW-0206">Cytoskeleton</keyword>
<keyword id="KW-0995">Kinetochore</keyword>
<keyword id="KW-0469">Meiosis</keyword>
<keyword id="KW-0493">Microtubule</keyword>
<keyword id="KW-0498">Mitosis</keyword>
<keyword id="KW-1185">Reference proteome</keyword>
<proteinExistence type="inferred from homology"/>
<gene>
    <name type="primary">cls-2</name>
    <name type="ORF">CBG09877</name>
</gene>